<sequence>MTAFPDVPVIQYEGPQSDNPLAFRWYNPDEVIEGKTMKDHMRFSIVYWHTFRGTGADPFGPGTAVRPWDNGSESVENAQKRAVVAFELFTKLQAPYYAWHDRDVAPEGANLRETHANLDAVADVLEEQQKATGVKLLWGTANMFSNPRFMHGAATSCNADVFAYAGAQVKKALEVTKRLGGENYVFWGGREGYQNLYNTDMKRELDHLAKFFHMAVDYAKSIGFDGQFLIEPKPKEPTKHQYDSDAAACMNFLRAYDLDSHFKLNIETNHATLAGHTMMHELDYAGIQGGLGSIDANTGDLLLGWDTDQFPTDYYLTTQTMLMILKHGGIGTGGVNFDAKVRRESFEPIDLFHAHIGGMDAFAKGLKIAAAIRASGELADFVKNRYSTWDSGIGAKIEAGEVGFAELEAYMLEKGDVDANQSGRQEYLEHMINKYIDRV</sequence>
<feature type="chain" id="PRO_0000195790" description="Xylose isomerase">
    <location>
        <begin position="1"/>
        <end position="439"/>
    </location>
</feature>
<feature type="active site" evidence="1">
    <location>
        <position position="100"/>
    </location>
</feature>
<feature type="active site" evidence="1">
    <location>
        <position position="103"/>
    </location>
</feature>
<feature type="binding site" evidence="1">
    <location>
        <position position="231"/>
    </location>
    <ligand>
        <name>Mg(2+)</name>
        <dbReference type="ChEBI" id="CHEBI:18420"/>
        <label>1</label>
    </ligand>
</feature>
<feature type="binding site" evidence="1">
    <location>
        <position position="267"/>
    </location>
    <ligand>
        <name>Mg(2+)</name>
        <dbReference type="ChEBI" id="CHEBI:18420"/>
        <label>1</label>
    </ligand>
</feature>
<feature type="binding site" evidence="1">
    <location>
        <position position="267"/>
    </location>
    <ligand>
        <name>Mg(2+)</name>
        <dbReference type="ChEBI" id="CHEBI:18420"/>
        <label>2</label>
    </ligand>
</feature>
<feature type="binding site" evidence="1">
    <location>
        <position position="270"/>
    </location>
    <ligand>
        <name>Mg(2+)</name>
        <dbReference type="ChEBI" id="CHEBI:18420"/>
        <label>2</label>
    </ligand>
</feature>
<feature type="binding site" evidence="1">
    <location>
        <position position="295"/>
    </location>
    <ligand>
        <name>Mg(2+)</name>
        <dbReference type="ChEBI" id="CHEBI:18420"/>
        <label>1</label>
    </ligand>
</feature>
<feature type="binding site" evidence="1">
    <location>
        <position position="306"/>
    </location>
    <ligand>
        <name>Mg(2+)</name>
        <dbReference type="ChEBI" id="CHEBI:18420"/>
        <label>2</label>
    </ligand>
</feature>
<feature type="binding site" evidence="1">
    <location>
        <position position="308"/>
    </location>
    <ligand>
        <name>Mg(2+)</name>
        <dbReference type="ChEBI" id="CHEBI:18420"/>
        <label>2</label>
    </ligand>
</feature>
<feature type="binding site" evidence="1">
    <location>
        <position position="338"/>
    </location>
    <ligand>
        <name>Mg(2+)</name>
        <dbReference type="ChEBI" id="CHEBI:18420"/>
        <label>1</label>
    </ligand>
</feature>
<proteinExistence type="inferred from homology"/>
<dbReference type="EC" id="5.3.1.5" evidence="1"/>
<dbReference type="EMBL" id="BX294137">
    <property type="protein sequence ID" value="CAD72762.1"/>
    <property type="status" value="ALT_INIT"/>
    <property type="molecule type" value="Genomic_DNA"/>
</dbReference>
<dbReference type="RefSeq" id="NP_865078.2">
    <property type="nucleotide sequence ID" value="NC_005027.1"/>
</dbReference>
<dbReference type="RefSeq" id="WP_011118969.1">
    <property type="nucleotide sequence ID" value="NC_005027.1"/>
</dbReference>
<dbReference type="SMR" id="Q7UVG2"/>
<dbReference type="FunCoup" id="Q7UVG2">
    <property type="interactions" value="222"/>
</dbReference>
<dbReference type="STRING" id="243090.RB2658"/>
<dbReference type="EnsemblBacteria" id="CAD72762">
    <property type="protein sequence ID" value="CAD72762"/>
    <property type="gene ID" value="RB2658"/>
</dbReference>
<dbReference type="KEGG" id="rba:RB2658"/>
<dbReference type="PATRIC" id="fig|243090.15.peg.1221"/>
<dbReference type="eggNOG" id="COG2115">
    <property type="taxonomic scope" value="Bacteria"/>
</dbReference>
<dbReference type="HOGENOM" id="CLU_037261_1_0_0"/>
<dbReference type="InParanoid" id="Q7UVG2"/>
<dbReference type="OrthoDB" id="9763981at2"/>
<dbReference type="Proteomes" id="UP000001025">
    <property type="component" value="Chromosome"/>
</dbReference>
<dbReference type="GO" id="GO:0005737">
    <property type="term" value="C:cytoplasm"/>
    <property type="evidence" value="ECO:0007669"/>
    <property type="project" value="UniProtKB-SubCell"/>
</dbReference>
<dbReference type="GO" id="GO:0000287">
    <property type="term" value="F:magnesium ion binding"/>
    <property type="evidence" value="ECO:0007669"/>
    <property type="project" value="UniProtKB-UniRule"/>
</dbReference>
<dbReference type="GO" id="GO:0009045">
    <property type="term" value="F:xylose isomerase activity"/>
    <property type="evidence" value="ECO:0007669"/>
    <property type="project" value="UniProtKB-UniRule"/>
</dbReference>
<dbReference type="GO" id="GO:0042732">
    <property type="term" value="P:D-xylose metabolic process"/>
    <property type="evidence" value="ECO:0007669"/>
    <property type="project" value="UniProtKB-UniRule"/>
</dbReference>
<dbReference type="FunFam" id="3.20.20.150:FF:000002">
    <property type="entry name" value="Xylose isomerase"/>
    <property type="match status" value="1"/>
</dbReference>
<dbReference type="Gene3D" id="3.20.20.150">
    <property type="entry name" value="Divalent-metal-dependent TIM barrel enzymes"/>
    <property type="match status" value="1"/>
</dbReference>
<dbReference type="HAMAP" id="MF_00455">
    <property type="entry name" value="Xylose_isom_A"/>
    <property type="match status" value="1"/>
</dbReference>
<dbReference type="InterPro" id="IPR036237">
    <property type="entry name" value="Xyl_isomerase-like_sf"/>
</dbReference>
<dbReference type="InterPro" id="IPR013022">
    <property type="entry name" value="Xyl_isomerase-like_TIM-brl"/>
</dbReference>
<dbReference type="InterPro" id="IPR013452">
    <property type="entry name" value="Xylose_isom_bac"/>
</dbReference>
<dbReference type="InterPro" id="IPR001998">
    <property type="entry name" value="Xylose_isomerase"/>
</dbReference>
<dbReference type="NCBIfam" id="NF003998">
    <property type="entry name" value="PRK05474.1"/>
    <property type="match status" value="1"/>
</dbReference>
<dbReference type="NCBIfam" id="TIGR02630">
    <property type="entry name" value="xylose_isom_A"/>
    <property type="match status" value="1"/>
</dbReference>
<dbReference type="PANTHER" id="PTHR48408">
    <property type="match status" value="1"/>
</dbReference>
<dbReference type="PANTHER" id="PTHR48408:SF1">
    <property type="entry name" value="XYLOSE ISOMERASE"/>
    <property type="match status" value="1"/>
</dbReference>
<dbReference type="Pfam" id="PF01261">
    <property type="entry name" value="AP_endonuc_2"/>
    <property type="match status" value="1"/>
</dbReference>
<dbReference type="PRINTS" id="PR00688">
    <property type="entry name" value="XYLOSISMRASE"/>
</dbReference>
<dbReference type="SUPFAM" id="SSF51658">
    <property type="entry name" value="Xylose isomerase-like"/>
    <property type="match status" value="1"/>
</dbReference>
<dbReference type="PROSITE" id="PS51415">
    <property type="entry name" value="XYLOSE_ISOMERASE"/>
    <property type="match status" value="1"/>
</dbReference>
<organism>
    <name type="scientific">Rhodopirellula baltica (strain DSM 10527 / NCIMB 13988 / SH1)</name>
    <dbReference type="NCBI Taxonomy" id="243090"/>
    <lineage>
        <taxon>Bacteria</taxon>
        <taxon>Pseudomonadati</taxon>
        <taxon>Planctomycetota</taxon>
        <taxon>Planctomycetia</taxon>
        <taxon>Pirellulales</taxon>
        <taxon>Pirellulaceae</taxon>
        <taxon>Rhodopirellula</taxon>
    </lineage>
</organism>
<comment type="catalytic activity">
    <reaction evidence="1">
        <text>alpha-D-xylose = alpha-D-xylulofuranose</text>
        <dbReference type="Rhea" id="RHEA:22816"/>
        <dbReference type="ChEBI" id="CHEBI:28518"/>
        <dbReference type="ChEBI" id="CHEBI:188998"/>
        <dbReference type="EC" id="5.3.1.5"/>
    </reaction>
</comment>
<comment type="cofactor">
    <cofactor evidence="1">
        <name>Mg(2+)</name>
        <dbReference type="ChEBI" id="CHEBI:18420"/>
    </cofactor>
    <text evidence="1">Binds 2 magnesium ions per subunit.</text>
</comment>
<comment type="subunit">
    <text evidence="1">Homotetramer.</text>
</comment>
<comment type="subcellular location">
    <subcellularLocation>
        <location evidence="1">Cytoplasm</location>
    </subcellularLocation>
</comment>
<comment type="similarity">
    <text evidence="1">Belongs to the xylose isomerase family.</text>
</comment>
<comment type="sequence caution" evidence="2">
    <conflict type="erroneous initiation">
        <sequence resource="EMBL-CDS" id="CAD72762"/>
    </conflict>
</comment>
<evidence type="ECO:0000255" key="1">
    <source>
        <dbReference type="HAMAP-Rule" id="MF_00455"/>
    </source>
</evidence>
<evidence type="ECO:0000305" key="2"/>
<reference key="1">
    <citation type="journal article" date="2003" name="Proc. Natl. Acad. Sci. U.S.A.">
        <title>Complete genome sequence of the marine planctomycete Pirellula sp. strain 1.</title>
        <authorList>
            <person name="Gloeckner F.O."/>
            <person name="Kube M."/>
            <person name="Bauer M."/>
            <person name="Teeling H."/>
            <person name="Lombardot T."/>
            <person name="Ludwig W."/>
            <person name="Gade D."/>
            <person name="Beck A."/>
            <person name="Borzym K."/>
            <person name="Heitmann K."/>
            <person name="Rabus R."/>
            <person name="Schlesner H."/>
            <person name="Amann R."/>
            <person name="Reinhardt R."/>
        </authorList>
    </citation>
    <scope>NUCLEOTIDE SEQUENCE [LARGE SCALE GENOMIC DNA]</scope>
    <source>
        <strain>DSM 10527 / NCIMB 13988 / SH1</strain>
    </source>
</reference>
<accession>Q7UVG2</accession>
<name>XYLA_RHOBA</name>
<gene>
    <name evidence="1" type="primary">xylA</name>
    <name type="ordered locus">RB2658</name>
</gene>
<protein>
    <recommendedName>
        <fullName evidence="1">Xylose isomerase</fullName>
        <ecNumber evidence="1">5.3.1.5</ecNumber>
    </recommendedName>
</protein>
<keyword id="KW-0119">Carbohydrate metabolism</keyword>
<keyword id="KW-0963">Cytoplasm</keyword>
<keyword id="KW-0413">Isomerase</keyword>
<keyword id="KW-0460">Magnesium</keyword>
<keyword id="KW-0479">Metal-binding</keyword>
<keyword id="KW-1185">Reference proteome</keyword>
<keyword id="KW-0859">Xylose metabolism</keyword>